<keyword id="KW-0479">Metal-binding</keyword>
<keyword id="KW-0520">NAD</keyword>
<keyword id="KW-0539">Nucleus</keyword>
<keyword id="KW-1185">Reference proteome</keyword>
<keyword id="KW-0678">Repressor</keyword>
<keyword id="KW-0804">Transcription</keyword>
<keyword id="KW-0805">Transcription regulation</keyword>
<keyword id="KW-0808">Transferase</keyword>
<keyword id="KW-0862">Zinc</keyword>
<protein>
    <recommendedName>
        <fullName>NAD-dependent protein deacetylase hst2-2</fullName>
        <ecNumber evidence="2">2.3.1.286</ecNumber>
    </recommendedName>
    <alternativeName>
        <fullName>Homologous to SIR2 protein 2-2</fullName>
    </alternativeName>
    <alternativeName>
        <fullName>Regulatory protein SIR2 homolog 2-2</fullName>
    </alternativeName>
</protein>
<evidence type="ECO:0000250" key="1"/>
<evidence type="ECO:0000255" key="2">
    <source>
        <dbReference type="PROSITE-ProRule" id="PRU00236"/>
    </source>
</evidence>
<evidence type="ECO:0000305" key="3"/>
<dbReference type="EC" id="2.3.1.286" evidence="2"/>
<dbReference type="EMBL" id="AACD01000153">
    <property type="protein sequence ID" value="EAA67072.1"/>
    <property type="status" value="ALT_SEQ"/>
    <property type="molecule type" value="Genomic_DNA"/>
</dbReference>
<dbReference type="EMBL" id="BN001305">
    <property type="protein sequence ID" value="CBF80579.1"/>
    <property type="molecule type" value="Genomic_DNA"/>
</dbReference>
<dbReference type="RefSeq" id="XP_681719.1">
    <property type="nucleotide sequence ID" value="XM_676627.1"/>
</dbReference>
<dbReference type="SMR" id="P0CS88"/>
<dbReference type="STRING" id="227321.P0CS88"/>
<dbReference type="KEGG" id="ani:ANIA_08450"/>
<dbReference type="VEuPathDB" id="FungiDB:AN11873"/>
<dbReference type="eggNOG" id="KOG2682">
    <property type="taxonomic scope" value="Eukaryota"/>
</dbReference>
<dbReference type="eggNOG" id="KOG4177">
    <property type="taxonomic scope" value="Eukaryota"/>
</dbReference>
<dbReference type="HOGENOM" id="CLU_001569_0_0_1"/>
<dbReference type="InParanoid" id="P0CS88"/>
<dbReference type="OrthoDB" id="3182339at2759"/>
<dbReference type="Proteomes" id="UP000000560">
    <property type="component" value="Chromosome V"/>
</dbReference>
<dbReference type="GO" id="GO:0005634">
    <property type="term" value="C:nucleus"/>
    <property type="evidence" value="ECO:0000318"/>
    <property type="project" value="GO_Central"/>
</dbReference>
<dbReference type="GO" id="GO:0017136">
    <property type="term" value="F:histone deacetylase activity, NAD-dependent"/>
    <property type="evidence" value="ECO:0000318"/>
    <property type="project" value="GO_Central"/>
</dbReference>
<dbReference type="GO" id="GO:0046872">
    <property type="term" value="F:metal ion binding"/>
    <property type="evidence" value="ECO:0007669"/>
    <property type="project" value="UniProtKB-KW"/>
</dbReference>
<dbReference type="GO" id="GO:0070403">
    <property type="term" value="F:NAD+ binding"/>
    <property type="evidence" value="ECO:0000318"/>
    <property type="project" value="GO_Central"/>
</dbReference>
<dbReference type="GO" id="GO:0000183">
    <property type="term" value="P:rDNA heterochromatin formation"/>
    <property type="evidence" value="ECO:0000318"/>
    <property type="project" value="GO_Central"/>
</dbReference>
<dbReference type="CDD" id="cd01408">
    <property type="entry name" value="SIRT1"/>
    <property type="match status" value="1"/>
</dbReference>
<dbReference type="Gene3D" id="3.30.1600.10">
    <property type="entry name" value="SIR2/SIRT2 'Small Domain"/>
    <property type="match status" value="1"/>
</dbReference>
<dbReference type="Gene3D" id="3.40.50.1220">
    <property type="entry name" value="TPP-binding domain"/>
    <property type="match status" value="1"/>
</dbReference>
<dbReference type="InterPro" id="IPR029035">
    <property type="entry name" value="DHS-like_NAD/FAD-binding_dom"/>
</dbReference>
<dbReference type="InterPro" id="IPR050134">
    <property type="entry name" value="NAD-dep_sirtuin_deacylases"/>
</dbReference>
<dbReference type="InterPro" id="IPR003000">
    <property type="entry name" value="Sirtuin"/>
</dbReference>
<dbReference type="InterPro" id="IPR026591">
    <property type="entry name" value="Sirtuin_cat_small_dom_sf"/>
</dbReference>
<dbReference type="InterPro" id="IPR026590">
    <property type="entry name" value="Ssirtuin_cat_dom"/>
</dbReference>
<dbReference type="PANTHER" id="PTHR11085:SF14">
    <property type="entry name" value="NAD-DEPENDENT PROTEIN DEACETYLASE HST2-2"/>
    <property type="match status" value="1"/>
</dbReference>
<dbReference type="PANTHER" id="PTHR11085">
    <property type="entry name" value="NAD-DEPENDENT PROTEIN DEACYLASE SIRTUIN-5, MITOCHONDRIAL-RELATED"/>
    <property type="match status" value="1"/>
</dbReference>
<dbReference type="Pfam" id="PF02146">
    <property type="entry name" value="SIR2"/>
    <property type="match status" value="1"/>
</dbReference>
<dbReference type="SUPFAM" id="SSF52467">
    <property type="entry name" value="DHS-like NAD/FAD-binding domain"/>
    <property type="match status" value="1"/>
</dbReference>
<dbReference type="PROSITE" id="PS50305">
    <property type="entry name" value="SIRTUIN"/>
    <property type="match status" value="1"/>
</dbReference>
<feature type="chain" id="PRO_0000417411" description="NAD-dependent protein deacetylase hst2-2">
    <location>
        <begin position="1"/>
        <end position="354"/>
    </location>
</feature>
<feature type="domain" description="Deacetylase sirtuin-type" evidence="2">
    <location>
        <begin position="16"/>
        <end position="279"/>
    </location>
</feature>
<feature type="active site" description="Proton acceptor" evidence="2">
    <location>
        <position position="146"/>
    </location>
</feature>
<feature type="binding site" evidence="1">
    <location>
        <begin position="43"/>
        <end position="63"/>
    </location>
    <ligand>
        <name>NAD(+)</name>
        <dbReference type="ChEBI" id="CHEBI:57540"/>
    </ligand>
</feature>
<feature type="binding site" evidence="1">
    <location>
        <begin position="126"/>
        <end position="129"/>
    </location>
    <ligand>
        <name>NAD(+)</name>
        <dbReference type="ChEBI" id="CHEBI:57540"/>
    </ligand>
</feature>
<feature type="binding site" evidence="2">
    <location>
        <position position="154"/>
    </location>
    <ligand>
        <name>Zn(2+)</name>
        <dbReference type="ChEBI" id="CHEBI:29105"/>
    </ligand>
</feature>
<feature type="binding site" evidence="2">
    <location>
        <position position="157"/>
    </location>
    <ligand>
        <name>Zn(2+)</name>
        <dbReference type="ChEBI" id="CHEBI:29105"/>
    </ligand>
</feature>
<feature type="binding site" evidence="2">
    <location>
        <position position="178"/>
    </location>
    <ligand>
        <name>Zn(2+)</name>
        <dbReference type="ChEBI" id="CHEBI:29105"/>
    </ligand>
</feature>
<feature type="binding site" evidence="2">
    <location>
        <position position="183"/>
    </location>
    <ligand>
        <name>Zn(2+)</name>
        <dbReference type="ChEBI" id="CHEBI:29105"/>
    </ligand>
</feature>
<feature type="binding site" evidence="1">
    <location>
        <begin position="220"/>
        <end position="222"/>
    </location>
    <ligand>
        <name>NAD(+)</name>
        <dbReference type="ChEBI" id="CHEBI:57540"/>
    </ligand>
</feature>
<feature type="binding site" evidence="1">
    <location>
        <begin position="245"/>
        <end position="247"/>
    </location>
    <ligand>
        <name>NAD(+)</name>
        <dbReference type="ChEBI" id="CHEBI:57540"/>
    </ligand>
</feature>
<feature type="binding site" evidence="1">
    <location>
        <position position="265"/>
    </location>
    <ligand>
        <name>NAD(+)</name>
        <dbReference type="ChEBI" id="CHEBI:57540"/>
    </ligand>
</feature>
<accession>P0CS88</accession>
<accession>C8VEG1</accession>
<accession>Q5ATD0</accession>
<comment type="function">
    <text evidence="1">NAD-dependent histone deacetylase, which could function in telomeric silencing, cell cycle progression and chromosome stability.</text>
</comment>
<comment type="catalytic activity">
    <reaction evidence="2">
        <text>N(6)-acetyl-L-lysyl-[protein] + NAD(+) + H2O = 2''-O-acetyl-ADP-D-ribose + nicotinamide + L-lysyl-[protein]</text>
        <dbReference type="Rhea" id="RHEA:43636"/>
        <dbReference type="Rhea" id="RHEA-COMP:9752"/>
        <dbReference type="Rhea" id="RHEA-COMP:10731"/>
        <dbReference type="ChEBI" id="CHEBI:15377"/>
        <dbReference type="ChEBI" id="CHEBI:17154"/>
        <dbReference type="ChEBI" id="CHEBI:29969"/>
        <dbReference type="ChEBI" id="CHEBI:57540"/>
        <dbReference type="ChEBI" id="CHEBI:61930"/>
        <dbReference type="ChEBI" id="CHEBI:83767"/>
        <dbReference type="EC" id="2.3.1.286"/>
    </reaction>
</comment>
<comment type="cofactor">
    <cofactor evidence="1">
        <name>Zn(2+)</name>
        <dbReference type="ChEBI" id="CHEBI:29105"/>
    </cofactor>
    <text evidence="1">Binds 1 zinc ion per subunit.</text>
</comment>
<comment type="subcellular location">
    <subcellularLocation>
        <location evidence="1">Nucleus</location>
    </subcellularLocation>
</comment>
<comment type="similarity">
    <text evidence="3">Belongs to the sirtuin family. Class I subfamily.</text>
</comment>
<comment type="sequence caution" evidence="3">
    <conflict type="erroneous gene model prediction">
        <sequence resource="EMBL-CDS" id="EAA67072"/>
    </conflict>
    <text>The predicted gene AN8450 has been split into 2 genes: AN11873 and AN11874.</text>
</comment>
<name>HST22_EMENI</name>
<organism>
    <name type="scientific">Emericella nidulans (strain FGSC A4 / ATCC 38163 / CBS 112.46 / NRRL 194 / M139)</name>
    <name type="common">Aspergillus nidulans</name>
    <dbReference type="NCBI Taxonomy" id="227321"/>
    <lineage>
        <taxon>Eukaryota</taxon>
        <taxon>Fungi</taxon>
        <taxon>Dikarya</taxon>
        <taxon>Ascomycota</taxon>
        <taxon>Pezizomycotina</taxon>
        <taxon>Eurotiomycetes</taxon>
        <taxon>Eurotiomycetidae</taxon>
        <taxon>Eurotiales</taxon>
        <taxon>Aspergillaceae</taxon>
        <taxon>Aspergillus</taxon>
        <taxon>Aspergillus subgen. Nidulantes</taxon>
    </lineage>
</organism>
<reference key="1">
    <citation type="journal article" date="2005" name="Nature">
        <title>Sequencing of Aspergillus nidulans and comparative analysis with A. fumigatus and A. oryzae.</title>
        <authorList>
            <person name="Galagan J.E."/>
            <person name="Calvo S.E."/>
            <person name="Cuomo C."/>
            <person name="Ma L.-J."/>
            <person name="Wortman J.R."/>
            <person name="Batzoglou S."/>
            <person name="Lee S.-I."/>
            <person name="Bastuerkmen M."/>
            <person name="Spevak C.C."/>
            <person name="Clutterbuck J."/>
            <person name="Kapitonov V."/>
            <person name="Jurka J."/>
            <person name="Scazzocchio C."/>
            <person name="Farman M.L."/>
            <person name="Butler J."/>
            <person name="Purcell S."/>
            <person name="Harris S."/>
            <person name="Braus G.H."/>
            <person name="Draht O."/>
            <person name="Busch S."/>
            <person name="D'Enfert C."/>
            <person name="Bouchier C."/>
            <person name="Goldman G.H."/>
            <person name="Bell-Pedersen D."/>
            <person name="Griffiths-Jones S."/>
            <person name="Doonan J.H."/>
            <person name="Yu J."/>
            <person name="Vienken K."/>
            <person name="Pain A."/>
            <person name="Freitag M."/>
            <person name="Selker E.U."/>
            <person name="Archer D.B."/>
            <person name="Penalva M.A."/>
            <person name="Oakley B.R."/>
            <person name="Momany M."/>
            <person name="Tanaka T."/>
            <person name="Kumagai T."/>
            <person name="Asai K."/>
            <person name="Machida M."/>
            <person name="Nierman W.C."/>
            <person name="Denning D.W."/>
            <person name="Caddick M.X."/>
            <person name="Hynes M."/>
            <person name="Paoletti M."/>
            <person name="Fischer R."/>
            <person name="Miller B.L."/>
            <person name="Dyer P.S."/>
            <person name="Sachs M.S."/>
            <person name="Osmani S.A."/>
            <person name="Birren B.W."/>
        </authorList>
    </citation>
    <scope>NUCLEOTIDE SEQUENCE [LARGE SCALE GENOMIC DNA]</scope>
    <source>
        <strain>FGSC A4 / ATCC 38163 / CBS 112.46 / NRRL 194 / M139</strain>
    </source>
</reference>
<reference key="2">
    <citation type="journal article" date="2009" name="Fungal Genet. Biol.">
        <title>The 2008 update of the Aspergillus nidulans genome annotation: a community effort.</title>
        <authorList>
            <person name="Wortman J.R."/>
            <person name="Gilsenan J.M."/>
            <person name="Joardar V."/>
            <person name="Deegan J."/>
            <person name="Clutterbuck J."/>
            <person name="Andersen M.R."/>
            <person name="Archer D."/>
            <person name="Bencina M."/>
            <person name="Braus G."/>
            <person name="Coutinho P."/>
            <person name="von Dohren H."/>
            <person name="Doonan J."/>
            <person name="Driessen A.J."/>
            <person name="Durek P."/>
            <person name="Espeso E."/>
            <person name="Fekete E."/>
            <person name="Flipphi M."/>
            <person name="Estrada C.G."/>
            <person name="Geysens S."/>
            <person name="Goldman G."/>
            <person name="de Groot P.W."/>
            <person name="Hansen K."/>
            <person name="Harris S.D."/>
            <person name="Heinekamp T."/>
            <person name="Helmstaedt K."/>
            <person name="Henrissat B."/>
            <person name="Hofmann G."/>
            <person name="Homan T."/>
            <person name="Horio T."/>
            <person name="Horiuchi H."/>
            <person name="James S."/>
            <person name="Jones M."/>
            <person name="Karaffa L."/>
            <person name="Karanyi Z."/>
            <person name="Kato M."/>
            <person name="Keller N."/>
            <person name="Kelly D.E."/>
            <person name="Kiel J.A."/>
            <person name="Kim J.M."/>
            <person name="van der Klei I.J."/>
            <person name="Klis F.M."/>
            <person name="Kovalchuk A."/>
            <person name="Krasevec N."/>
            <person name="Kubicek C.P."/>
            <person name="Liu B."/>
            <person name="Maccabe A."/>
            <person name="Meyer V."/>
            <person name="Mirabito P."/>
            <person name="Miskei M."/>
            <person name="Mos M."/>
            <person name="Mullins J."/>
            <person name="Nelson D.R."/>
            <person name="Nielsen J."/>
            <person name="Oakley B.R."/>
            <person name="Osmani S.A."/>
            <person name="Pakula T."/>
            <person name="Paszewski A."/>
            <person name="Paulsen I."/>
            <person name="Pilsyk S."/>
            <person name="Pocsi I."/>
            <person name="Punt P.J."/>
            <person name="Ram A.F."/>
            <person name="Ren Q."/>
            <person name="Robellet X."/>
            <person name="Robson G."/>
            <person name="Seiboth B."/>
            <person name="van Solingen P."/>
            <person name="Specht T."/>
            <person name="Sun J."/>
            <person name="Taheri-Talesh N."/>
            <person name="Takeshita N."/>
            <person name="Ussery D."/>
            <person name="vanKuyk P.A."/>
            <person name="Visser H."/>
            <person name="van de Vondervoort P.J."/>
            <person name="de Vries R.P."/>
            <person name="Walton J."/>
            <person name="Xiang X."/>
            <person name="Xiong Y."/>
            <person name="Zeng A.P."/>
            <person name="Brandt B.W."/>
            <person name="Cornell M.J."/>
            <person name="van den Hondel C.A."/>
            <person name="Visser J."/>
            <person name="Oliver S.G."/>
            <person name="Turner G."/>
        </authorList>
    </citation>
    <scope>GENOME REANNOTATION</scope>
    <source>
        <strain>FGSC A4 / ATCC 38163 / CBS 112.46 / NRRL 194 / M139</strain>
    </source>
</reference>
<sequence>MSSLRAHQKKNPTPTQCQNQTTLDSICKDIQTGKITRIVALVGAGLSTSSGLADFRTPDTGLYAKLEPLQLPYPEALFHISYFKHTPEPFYAIARGRHPWNTKPGVGHAFLALLEKKGVLGFVFTQNIDGLELDAGVSRERVMNLHGDWSDQHCIKCRSSYPADRMRKAILTGEVPFCVQANCEGIVKPAIVMFGESLPEGFDSREEEMLSTADLLLVIGTSLKVAPCSEIPRRLPSHVPRVLVNRELVGNIGTRESDVCLLGDCDAWLREVARHLGWDEELESVWKDTLVRKEKSSRDKGWDDKAEQSPTLEECIVRAAEQMKVRMGVSEGHRRMLEGHLGEKMAEIMAKRGQ</sequence>
<gene>
    <name type="ORF">AN11873</name>
</gene>
<proteinExistence type="inferred from homology"/>